<proteinExistence type="inferred from homology"/>
<dbReference type="EMBL" id="AB001488">
    <property type="protein sequence ID" value="BAA19296.1"/>
    <property type="molecule type" value="Genomic_DNA"/>
</dbReference>
<dbReference type="EMBL" id="AL009126">
    <property type="protein sequence ID" value="CAB12266.1"/>
    <property type="molecule type" value="Genomic_DNA"/>
</dbReference>
<dbReference type="PIR" id="E69772">
    <property type="entry name" value="E69772"/>
</dbReference>
<dbReference type="RefSeq" id="NP_388340.1">
    <property type="nucleotide sequence ID" value="NC_000964.3"/>
</dbReference>
<dbReference type="RefSeq" id="WP_003234318.1">
    <property type="nucleotide sequence ID" value="NZ_OZ025638.1"/>
</dbReference>
<dbReference type="FunCoup" id="P96615">
    <property type="interactions" value="31"/>
</dbReference>
<dbReference type="STRING" id="224308.BSU04590"/>
<dbReference type="PaxDb" id="224308-BSU04590"/>
<dbReference type="EnsemblBacteria" id="CAB12266">
    <property type="protein sequence ID" value="CAB12266"/>
    <property type="gene ID" value="BSU_04590"/>
</dbReference>
<dbReference type="GeneID" id="940149"/>
<dbReference type="KEGG" id="bsu:BSU04590"/>
<dbReference type="PATRIC" id="fig|224308.179.peg.487"/>
<dbReference type="eggNOG" id="COG3402">
    <property type="taxonomic scope" value="Bacteria"/>
</dbReference>
<dbReference type="InParanoid" id="P96615"/>
<dbReference type="OrthoDB" id="1750577at2"/>
<dbReference type="PhylomeDB" id="P96615"/>
<dbReference type="BioCyc" id="BSUB:BSU04590-MONOMER"/>
<dbReference type="Proteomes" id="UP000001570">
    <property type="component" value="Chromosome"/>
</dbReference>
<dbReference type="GO" id="GO:0005886">
    <property type="term" value="C:plasma membrane"/>
    <property type="evidence" value="ECO:0007669"/>
    <property type="project" value="UniProtKB-SubCell"/>
</dbReference>
<dbReference type="InterPro" id="IPR005182">
    <property type="entry name" value="YdbS-like_PH"/>
</dbReference>
<dbReference type="PANTHER" id="PTHR34473">
    <property type="entry name" value="UPF0699 TRANSMEMBRANE PROTEIN YDBS"/>
    <property type="match status" value="1"/>
</dbReference>
<dbReference type="PANTHER" id="PTHR34473:SF2">
    <property type="entry name" value="UPF0699 TRANSMEMBRANE PROTEIN YDBT"/>
    <property type="match status" value="1"/>
</dbReference>
<dbReference type="Pfam" id="PF03703">
    <property type="entry name" value="bPH_2"/>
    <property type="match status" value="1"/>
</dbReference>
<sequence>MREQPKNQISPDGLKVWRLQEIIISAVCLLIVIAVAVLSYYFHWPYWISGVLGAVWLLGSIVTVFIIPKVRHKVWRYEVHEHEIDIQSGIFVVTRVIVPMVRVQHVDTSQGPLLKKYNLATVKISTAATVHSIPALEMEEADRLRDSISRLARVTDDDV</sequence>
<comment type="subcellular location">
    <subcellularLocation>
        <location evidence="2">Cell membrane</location>
        <topology evidence="2">Multi-pass membrane protein</topology>
    </subcellularLocation>
</comment>
<comment type="similarity">
    <text evidence="2">Belongs to the UPF0699 family.</text>
</comment>
<name>YDBS_BACSU</name>
<evidence type="ECO:0000255" key="1"/>
<evidence type="ECO:0000305" key="2"/>
<feature type="chain" id="PRO_0000359975" description="UPF0699 transmembrane protein YdbS">
    <location>
        <begin position="1"/>
        <end position="159"/>
    </location>
</feature>
<feature type="transmembrane region" description="Helical" evidence="1">
    <location>
        <begin position="22"/>
        <end position="42"/>
    </location>
</feature>
<feature type="transmembrane region" description="Helical" evidence="1">
    <location>
        <begin position="47"/>
        <end position="67"/>
    </location>
</feature>
<reference key="1">
    <citation type="submission" date="1997-03" db="EMBL/GenBank/DDBJ databases">
        <title>A 148 kbp sequence of the region between 35 and 47 degree of the Bacillus subtilis genome.</title>
        <authorList>
            <person name="Kasahara Y."/>
            <person name="Nakai S."/>
            <person name="Lee S."/>
            <person name="Sadaie Y."/>
            <person name="Ogasawara N."/>
        </authorList>
    </citation>
    <scope>NUCLEOTIDE SEQUENCE [GENOMIC DNA]</scope>
    <source>
        <strain>168</strain>
    </source>
</reference>
<reference key="2">
    <citation type="journal article" date="1997" name="Nature">
        <title>The complete genome sequence of the Gram-positive bacterium Bacillus subtilis.</title>
        <authorList>
            <person name="Kunst F."/>
            <person name="Ogasawara N."/>
            <person name="Moszer I."/>
            <person name="Albertini A.M."/>
            <person name="Alloni G."/>
            <person name="Azevedo V."/>
            <person name="Bertero M.G."/>
            <person name="Bessieres P."/>
            <person name="Bolotin A."/>
            <person name="Borchert S."/>
            <person name="Borriss R."/>
            <person name="Boursier L."/>
            <person name="Brans A."/>
            <person name="Braun M."/>
            <person name="Brignell S.C."/>
            <person name="Bron S."/>
            <person name="Brouillet S."/>
            <person name="Bruschi C.V."/>
            <person name="Caldwell B."/>
            <person name="Capuano V."/>
            <person name="Carter N.M."/>
            <person name="Choi S.-K."/>
            <person name="Codani J.-J."/>
            <person name="Connerton I.F."/>
            <person name="Cummings N.J."/>
            <person name="Daniel R.A."/>
            <person name="Denizot F."/>
            <person name="Devine K.M."/>
            <person name="Duesterhoeft A."/>
            <person name="Ehrlich S.D."/>
            <person name="Emmerson P.T."/>
            <person name="Entian K.-D."/>
            <person name="Errington J."/>
            <person name="Fabret C."/>
            <person name="Ferrari E."/>
            <person name="Foulger D."/>
            <person name="Fritz C."/>
            <person name="Fujita M."/>
            <person name="Fujita Y."/>
            <person name="Fuma S."/>
            <person name="Galizzi A."/>
            <person name="Galleron N."/>
            <person name="Ghim S.-Y."/>
            <person name="Glaser P."/>
            <person name="Goffeau A."/>
            <person name="Golightly E.J."/>
            <person name="Grandi G."/>
            <person name="Guiseppi G."/>
            <person name="Guy B.J."/>
            <person name="Haga K."/>
            <person name="Haiech J."/>
            <person name="Harwood C.R."/>
            <person name="Henaut A."/>
            <person name="Hilbert H."/>
            <person name="Holsappel S."/>
            <person name="Hosono S."/>
            <person name="Hullo M.-F."/>
            <person name="Itaya M."/>
            <person name="Jones L.-M."/>
            <person name="Joris B."/>
            <person name="Karamata D."/>
            <person name="Kasahara Y."/>
            <person name="Klaerr-Blanchard M."/>
            <person name="Klein C."/>
            <person name="Kobayashi Y."/>
            <person name="Koetter P."/>
            <person name="Koningstein G."/>
            <person name="Krogh S."/>
            <person name="Kumano M."/>
            <person name="Kurita K."/>
            <person name="Lapidus A."/>
            <person name="Lardinois S."/>
            <person name="Lauber J."/>
            <person name="Lazarevic V."/>
            <person name="Lee S.-M."/>
            <person name="Levine A."/>
            <person name="Liu H."/>
            <person name="Masuda S."/>
            <person name="Mauel C."/>
            <person name="Medigue C."/>
            <person name="Medina N."/>
            <person name="Mellado R.P."/>
            <person name="Mizuno M."/>
            <person name="Moestl D."/>
            <person name="Nakai S."/>
            <person name="Noback M."/>
            <person name="Noone D."/>
            <person name="O'Reilly M."/>
            <person name="Ogawa K."/>
            <person name="Ogiwara A."/>
            <person name="Oudega B."/>
            <person name="Park S.-H."/>
            <person name="Parro V."/>
            <person name="Pohl T.M."/>
            <person name="Portetelle D."/>
            <person name="Porwollik S."/>
            <person name="Prescott A.M."/>
            <person name="Presecan E."/>
            <person name="Pujic P."/>
            <person name="Purnelle B."/>
            <person name="Rapoport G."/>
            <person name="Rey M."/>
            <person name="Reynolds S."/>
            <person name="Rieger M."/>
            <person name="Rivolta C."/>
            <person name="Rocha E."/>
            <person name="Roche B."/>
            <person name="Rose M."/>
            <person name="Sadaie Y."/>
            <person name="Sato T."/>
            <person name="Scanlan E."/>
            <person name="Schleich S."/>
            <person name="Schroeter R."/>
            <person name="Scoffone F."/>
            <person name="Sekiguchi J."/>
            <person name="Sekowska A."/>
            <person name="Seror S.J."/>
            <person name="Serror P."/>
            <person name="Shin B.-S."/>
            <person name="Soldo B."/>
            <person name="Sorokin A."/>
            <person name="Tacconi E."/>
            <person name="Takagi T."/>
            <person name="Takahashi H."/>
            <person name="Takemaru K."/>
            <person name="Takeuchi M."/>
            <person name="Tamakoshi A."/>
            <person name="Tanaka T."/>
            <person name="Terpstra P."/>
            <person name="Tognoni A."/>
            <person name="Tosato V."/>
            <person name="Uchiyama S."/>
            <person name="Vandenbol M."/>
            <person name="Vannier F."/>
            <person name="Vassarotti A."/>
            <person name="Viari A."/>
            <person name="Wambutt R."/>
            <person name="Wedler E."/>
            <person name="Wedler H."/>
            <person name="Weitzenegger T."/>
            <person name="Winters P."/>
            <person name="Wipat A."/>
            <person name="Yamamoto H."/>
            <person name="Yamane K."/>
            <person name="Yasumoto K."/>
            <person name="Yata K."/>
            <person name="Yoshida K."/>
            <person name="Yoshikawa H.-F."/>
            <person name="Zumstein E."/>
            <person name="Yoshikawa H."/>
            <person name="Danchin A."/>
        </authorList>
    </citation>
    <scope>NUCLEOTIDE SEQUENCE [LARGE SCALE GENOMIC DNA]</scope>
    <source>
        <strain>168</strain>
    </source>
</reference>
<accession>P96615</accession>
<accession>Q797K9</accession>
<protein>
    <recommendedName>
        <fullName>UPF0699 transmembrane protein YdbS</fullName>
    </recommendedName>
</protein>
<gene>
    <name type="primary">ydbS</name>
    <name type="ordered locus">BSU04590</name>
</gene>
<keyword id="KW-1003">Cell membrane</keyword>
<keyword id="KW-0472">Membrane</keyword>
<keyword id="KW-1185">Reference proteome</keyword>
<keyword id="KW-0812">Transmembrane</keyword>
<keyword id="KW-1133">Transmembrane helix</keyword>
<organism>
    <name type="scientific">Bacillus subtilis (strain 168)</name>
    <dbReference type="NCBI Taxonomy" id="224308"/>
    <lineage>
        <taxon>Bacteria</taxon>
        <taxon>Bacillati</taxon>
        <taxon>Bacillota</taxon>
        <taxon>Bacilli</taxon>
        <taxon>Bacillales</taxon>
        <taxon>Bacillaceae</taxon>
        <taxon>Bacillus</taxon>
    </lineage>
</organism>